<feature type="chain" id="PRO_1000136239" description="L-carnitine/gamma-butyrobetaine antiporter">
    <location>
        <begin position="1"/>
        <end position="505"/>
    </location>
</feature>
<feature type="transmembrane region" description="Helical" evidence="1">
    <location>
        <begin position="10"/>
        <end position="30"/>
    </location>
</feature>
<feature type="transmembrane region" description="Helical" evidence="1">
    <location>
        <begin position="51"/>
        <end position="71"/>
    </location>
</feature>
<feature type="transmembrane region" description="Helical" evidence="1">
    <location>
        <begin position="92"/>
        <end position="112"/>
    </location>
</feature>
<feature type="transmembrane region" description="Helical" evidence="1">
    <location>
        <begin position="143"/>
        <end position="163"/>
    </location>
</feature>
<feature type="transmembrane region" description="Helical" evidence="1">
    <location>
        <begin position="195"/>
        <end position="215"/>
    </location>
</feature>
<feature type="transmembrane region" description="Helical" evidence="1">
    <location>
        <begin position="231"/>
        <end position="251"/>
    </location>
</feature>
<feature type="transmembrane region" description="Helical" evidence="1">
    <location>
        <begin position="263"/>
        <end position="283"/>
    </location>
</feature>
<feature type="transmembrane region" description="Helical" evidence="1">
    <location>
        <begin position="316"/>
        <end position="336"/>
    </location>
</feature>
<feature type="transmembrane region" description="Helical" evidence="1">
    <location>
        <begin position="347"/>
        <end position="367"/>
    </location>
</feature>
<feature type="transmembrane region" description="Helical" evidence="1">
    <location>
        <begin position="403"/>
        <end position="423"/>
    </location>
</feature>
<feature type="transmembrane region" description="Helical" evidence="1">
    <location>
        <begin position="446"/>
        <end position="466"/>
    </location>
</feature>
<feature type="transmembrane region" description="Helical" evidence="1">
    <location>
        <begin position="475"/>
        <end position="495"/>
    </location>
</feature>
<name>CAIT_SALEP</name>
<dbReference type="EMBL" id="AM933172">
    <property type="protein sequence ID" value="CAR31664.1"/>
    <property type="molecule type" value="Genomic_DNA"/>
</dbReference>
<dbReference type="RefSeq" id="WP_000787073.1">
    <property type="nucleotide sequence ID" value="NC_011294.1"/>
</dbReference>
<dbReference type="SMR" id="B5R1R3"/>
<dbReference type="KEGG" id="set:SEN0075"/>
<dbReference type="HOGENOM" id="CLU_010118_6_0_6"/>
<dbReference type="UniPathway" id="UPA00117"/>
<dbReference type="Proteomes" id="UP000000613">
    <property type="component" value="Chromosome"/>
</dbReference>
<dbReference type="GO" id="GO:0005886">
    <property type="term" value="C:plasma membrane"/>
    <property type="evidence" value="ECO:0007669"/>
    <property type="project" value="UniProtKB-SubCell"/>
</dbReference>
<dbReference type="GO" id="GO:0044667">
    <property type="term" value="F:(R)-carnitine:4-(trimethylammonio)butanoate antiporter activity"/>
    <property type="evidence" value="ECO:0007669"/>
    <property type="project" value="UniProtKB-UniRule"/>
</dbReference>
<dbReference type="GO" id="GO:1900751">
    <property type="term" value="P:4-(trimethylammonio)butanoate transport"/>
    <property type="evidence" value="ECO:0007669"/>
    <property type="project" value="InterPro"/>
</dbReference>
<dbReference type="GO" id="GO:0009437">
    <property type="term" value="P:carnitine metabolic process"/>
    <property type="evidence" value="ECO:0007669"/>
    <property type="project" value="UniProtKB-UniRule"/>
</dbReference>
<dbReference type="HAMAP" id="MF_01049">
    <property type="entry name" value="CaiT"/>
    <property type="match status" value="1"/>
</dbReference>
<dbReference type="InterPro" id="IPR018093">
    <property type="entry name" value="BCCT_CS"/>
</dbReference>
<dbReference type="InterPro" id="IPR000060">
    <property type="entry name" value="BCCT_transptr"/>
</dbReference>
<dbReference type="InterPro" id="IPR023449">
    <property type="entry name" value="BCCT_transptr_CaiT"/>
</dbReference>
<dbReference type="NCBIfam" id="TIGR00842">
    <property type="entry name" value="bcct"/>
    <property type="match status" value="1"/>
</dbReference>
<dbReference type="NCBIfam" id="NF002887">
    <property type="entry name" value="PRK03356.1"/>
    <property type="match status" value="1"/>
</dbReference>
<dbReference type="PANTHER" id="PTHR30047">
    <property type="entry name" value="HIGH-AFFINITY CHOLINE TRANSPORT PROTEIN-RELATED"/>
    <property type="match status" value="1"/>
</dbReference>
<dbReference type="PANTHER" id="PTHR30047:SF11">
    <property type="entry name" value="L-CARNITINE_GAMMA-BUTYROBETAINE ANTIPORTER"/>
    <property type="match status" value="1"/>
</dbReference>
<dbReference type="Pfam" id="PF02028">
    <property type="entry name" value="BCCT"/>
    <property type="match status" value="1"/>
</dbReference>
<dbReference type="PROSITE" id="PS01303">
    <property type="entry name" value="BCCT"/>
    <property type="match status" value="1"/>
</dbReference>
<protein>
    <recommendedName>
        <fullName evidence="1">L-carnitine/gamma-butyrobetaine antiporter</fullName>
    </recommendedName>
</protein>
<organism>
    <name type="scientific">Salmonella enteritidis PT4 (strain P125109)</name>
    <dbReference type="NCBI Taxonomy" id="550537"/>
    <lineage>
        <taxon>Bacteria</taxon>
        <taxon>Pseudomonadati</taxon>
        <taxon>Pseudomonadota</taxon>
        <taxon>Gammaproteobacteria</taxon>
        <taxon>Enterobacterales</taxon>
        <taxon>Enterobacteriaceae</taxon>
        <taxon>Salmonella</taxon>
    </lineage>
</organism>
<comment type="function">
    <text evidence="1">Catalyzes the exchange of L-carnitine for gamma-butyrobetaine.</text>
</comment>
<comment type="catalytic activity">
    <reaction evidence="1">
        <text>4-(trimethylamino)butanoate(in) + (R)-carnitine(out) = 4-(trimethylamino)butanoate(out) + (R)-carnitine(in)</text>
        <dbReference type="Rhea" id="RHEA:29427"/>
        <dbReference type="ChEBI" id="CHEBI:16244"/>
        <dbReference type="ChEBI" id="CHEBI:16347"/>
    </reaction>
</comment>
<comment type="pathway">
    <text evidence="1">Amine and polyamine metabolism; carnitine metabolism.</text>
</comment>
<comment type="subunit">
    <text evidence="1">Homotrimer.</text>
</comment>
<comment type="subcellular location">
    <subcellularLocation>
        <location evidence="1">Cell inner membrane</location>
        <topology evidence="1">Multi-pass membrane protein</topology>
    </subcellularLocation>
</comment>
<comment type="similarity">
    <text evidence="1">Belongs to the BCCT transporter (TC 2.A.15) family. CaiT subfamily.</text>
</comment>
<reference key="1">
    <citation type="journal article" date="2008" name="Genome Res.">
        <title>Comparative genome analysis of Salmonella enteritidis PT4 and Salmonella gallinarum 287/91 provides insights into evolutionary and host adaptation pathways.</title>
        <authorList>
            <person name="Thomson N.R."/>
            <person name="Clayton D.J."/>
            <person name="Windhorst D."/>
            <person name="Vernikos G."/>
            <person name="Davidson S."/>
            <person name="Churcher C."/>
            <person name="Quail M.A."/>
            <person name="Stevens M."/>
            <person name="Jones M.A."/>
            <person name="Watson M."/>
            <person name="Barron A."/>
            <person name="Layton A."/>
            <person name="Pickard D."/>
            <person name="Kingsley R.A."/>
            <person name="Bignell A."/>
            <person name="Clark L."/>
            <person name="Harris B."/>
            <person name="Ormond D."/>
            <person name="Abdellah Z."/>
            <person name="Brooks K."/>
            <person name="Cherevach I."/>
            <person name="Chillingworth T."/>
            <person name="Woodward J."/>
            <person name="Norberczak H."/>
            <person name="Lord A."/>
            <person name="Arrowsmith C."/>
            <person name="Jagels K."/>
            <person name="Moule S."/>
            <person name="Mungall K."/>
            <person name="Saunders M."/>
            <person name="Whitehead S."/>
            <person name="Chabalgoity J.A."/>
            <person name="Maskell D."/>
            <person name="Humphreys T."/>
            <person name="Roberts M."/>
            <person name="Barrow P.A."/>
            <person name="Dougan G."/>
            <person name="Parkhill J."/>
        </authorList>
    </citation>
    <scope>NUCLEOTIDE SEQUENCE [LARGE SCALE GENOMIC DNA]</scope>
    <source>
        <strain>P125109</strain>
    </source>
</reference>
<proteinExistence type="inferred from homology"/>
<keyword id="KW-0050">Antiport</keyword>
<keyword id="KW-0997">Cell inner membrane</keyword>
<keyword id="KW-1003">Cell membrane</keyword>
<keyword id="KW-0472">Membrane</keyword>
<keyword id="KW-0812">Transmembrane</keyword>
<keyword id="KW-1133">Transmembrane helix</keyword>
<keyword id="KW-0813">Transport</keyword>
<sequence length="505" mass="56643">MKNEKKKSGIEPKVFFPPLIIVGILCWLTVRDLDAANVVINAVFSYVTNVWGWAFEWYMVVMLFGWFWLVFGPYAKKRLGDEKPEFSTASWIFMMFASCTSAAVLFWGSIEIYYYISTPPFGLEPNSTGAKEIGLAYSLFHWGPLPWATYSFLSVAFAYFFFVRKMDVIRPSSTLVPLVGEKHAKGLFGTIVDNFYLVALIFAMGTSLGLATPLVTECMQWLFGIPHTLQLDAIIITCWIILNAICVACGLQKGVRIASDVRSYLSFLMLGWVFIVSGASFIMNYFTDSVGMLLMHLPRMLFYTDAIGKGGFPQGWTVFYWAWWVIYAIQMSIFLARISRGRTVRELCFGMVMGLTASTWILWTVLGSNTLLLMDKNILNIPQLIEQHGVARAIIETWAALPLSTATMWGFFILCFIATVTLINACSYTLAMSTCREVRDGEEPPLLVRIGWSVLVGIIGIVLLALGGLKPIQTAIIAGGCPLFFVNIMVTLSFIKDAKVHWKDK</sequence>
<gene>
    <name evidence="1" type="primary">caiT</name>
    <name type="ordered locus">SEN0075</name>
</gene>
<evidence type="ECO:0000255" key="1">
    <source>
        <dbReference type="HAMAP-Rule" id="MF_01049"/>
    </source>
</evidence>
<accession>B5R1R3</accession>